<proteinExistence type="evidence at transcript level"/>
<reference key="1">
    <citation type="journal article" date="2008" name="Cell. Mol. Life Sci.">
        <title>Molecular diversity and evolution of cystine knot toxins of the tarantula Chilobrachys jingzhao.</title>
        <authorList>
            <person name="Chen J."/>
            <person name="Deng M."/>
            <person name="He Q."/>
            <person name="Meng E."/>
            <person name="Jiang L."/>
            <person name="Liao Z."/>
            <person name="Rong M."/>
            <person name="Liang S."/>
        </authorList>
    </citation>
    <scope>NUCLEOTIDE SEQUENCE [LARGE SCALE MRNA]</scope>
    <source>
        <tissue>Venom gland</tissue>
    </source>
</reference>
<accession>B1P1C2</accession>
<comment type="function">
    <text>Probable ion channel inhibitor.</text>
</comment>
<comment type="subcellular location">
    <subcellularLocation>
        <location evidence="1">Secreted</location>
    </subcellularLocation>
</comment>
<comment type="tissue specificity">
    <text>Expressed by the venom gland.</text>
</comment>
<comment type="domain">
    <text evidence="1">The presence of a 'disulfide through disulfide knot' structurally defines this protein as a knottin.</text>
</comment>
<comment type="similarity">
    <text evidence="3">Belongs to the neurotoxin 10 (Hwtx-1) family. 46 (Jztx-7/10/12) subfamily.</text>
</comment>
<keyword id="KW-1015">Disulfide bond</keyword>
<keyword id="KW-0872">Ion channel impairing toxin</keyword>
<keyword id="KW-0960">Knottin</keyword>
<keyword id="KW-0964">Secreted</keyword>
<keyword id="KW-0732">Signal</keyword>
<keyword id="KW-0800">Toxin</keyword>
<protein>
    <recommendedName>
        <fullName>U1-theraphotoxin-Cg1b</fullName>
        <shortName>U1-TRTX-Cg1b</shortName>
    </recommendedName>
    <alternativeName>
        <fullName>Jingzhaotoxin-10</fullName>
        <shortName>JZTX-10</shortName>
    </alternativeName>
</protein>
<name>JZT10_CHIGU</name>
<dbReference type="EMBL" id="EU233853">
    <property type="protein sequence ID" value="ABY71672.1"/>
    <property type="molecule type" value="mRNA"/>
</dbReference>
<dbReference type="SMR" id="B1P1C2"/>
<dbReference type="ArachnoServer" id="AS000802">
    <property type="toxin name" value="U1-theraphotoxin-Cg1b"/>
</dbReference>
<dbReference type="GO" id="GO:0005576">
    <property type="term" value="C:extracellular region"/>
    <property type="evidence" value="ECO:0007669"/>
    <property type="project" value="UniProtKB-SubCell"/>
</dbReference>
<dbReference type="GO" id="GO:0008200">
    <property type="term" value="F:ion channel inhibitor activity"/>
    <property type="evidence" value="ECO:0007669"/>
    <property type="project" value="InterPro"/>
</dbReference>
<dbReference type="GO" id="GO:0090729">
    <property type="term" value="F:toxin activity"/>
    <property type="evidence" value="ECO:0007669"/>
    <property type="project" value="UniProtKB-KW"/>
</dbReference>
<dbReference type="InterPro" id="IPR011696">
    <property type="entry name" value="Huwentoxin-1"/>
</dbReference>
<dbReference type="InterPro" id="IPR013140">
    <property type="entry name" value="Huwentoxin_CS1"/>
</dbReference>
<dbReference type="Pfam" id="PF07740">
    <property type="entry name" value="Toxin_12"/>
    <property type="match status" value="1"/>
</dbReference>
<dbReference type="SUPFAM" id="SSF57059">
    <property type="entry name" value="omega toxin-like"/>
    <property type="match status" value="1"/>
</dbReference>
<dbReference type="PROSITE" id="PS60021">
    <property type="entry name" value="HWTX_1"/>
    <property type="match status" value="1"/>
</dbReference>
<sequence length="66" mass="7082">MKTSALFVIFGLVLLFCNSFAAELKTTGRGCGGLMAGCGGKSTFCCSGYNCSPTWKWCVYARPGRR</sequence>
<feature type="signal peptide" evidence="2">
    <location>
        <begin position="1"/>
        <end position="21"/>
    </location>
</feature>
<feature type="propeptide" id="PRO_0000398405" evidence="1">
    <location>
        <begin position="22"/>
        <end position="29"/>
    </location>
</feature>
<feature type="peptide" id="PRO_0000398406" description="U1-theraphotoxin-Cg1b">
    <location>
        <begin position="30"/>
        <end position="66"/>
    </location>
</feature>
<feature type="disulfide bond" evidence="1">
    <location>
        <begin position="31"/>
        <end position="46"/>
    </location>
</feature>
<feature type="disulfide bond" evidence="1">
    <location>
        <begin position="38"/>
        <end position="51"/>
    </location>
</feature>
<feature type="disulfide bond" evidence="1">
    <location>
        <begin position="45"/>
        <end position="58"/>
    </location>
</feature>
<evidence type="ECO:0000250" key="1"/>
<evidence type="ECO:0000255" key="2"/>
<evidence type="ECO:0000305" key="3"/>
<organism>
    <name type="scientific">Chilobrachys guangxiensis</name>
    <name type="common">Chinese earth tiger tarantula</name>
    <name type="synonym">Chilobrachys jingzhao</name>
    <dbReference type="NCBI Taxonomy" id="278060"/>
    <lineage>
        <taxon>Eukaryota</taxon>
        <taxon>Metazoa</taxon>
        <taxon>Ecdysozoa</taxon>
        <taxon>Arthropoda</taxon>
        <taxon>Chelicerata</taxon>
        <taxon>Arachnida</taxon>
        <taxon>Araneae</taxon>
        <taxon>Mygalomorphae</taxon>
        <taxon>Theraphosidae</taxon>
        <taxon>Chilobrachys</taxon>
    </lineage>
</organism>